<feature type="chain" id="PRO_1000115976" description="Probable GTP-binding protein EngB">
    <location>
        <begin position="1"/>
        <end position="206"/>
    </location>
</feature>
<feature type="domain" description="EngB-type G" evidence="1">
    <location>
        <begin position="8"/>
        <end position="195"/>
    </location>
</feature>
<feature type="binding site" evidence="1">
    <location>
        <begin position="16"/>
        <end position="23"/>
    </location>
    <ligand>
        <name>GTP</name>
        <dbReference type="ChEBI" id="CHEBI:37565"/>
    </ligand>
</feature>
<feature type="binding site" evidence="1">
    <location>
        <position position="23"/>
    </location>
    <ligand>
        <name>Mg(2+)</name>
        <dbReference type="ChEBI" id="CHEBI:18420"/>
    </ligand>
</feature>
<feature type="binding site" evidence="1">
    <location>
        <begin position="41"/>
        <end position="45"/>
    </location>
    <ligand>
        <name>GTP</name>
        <dbReference type="ChEBI" id="CHEBI:37565"/>
    </ligand>
</feature>
<feature type="binding site" evidence="1">
    <location>
        <position position="43"/>
    </location>
    <ligand>
        <name>Mg(2+)</name>
        <dbReference type="ChEBI" id="CHEBI:18420"/>
    </ligand>
</feature>
<feature type="binding site" evidence="1">
    <location>
        <begin position="60"/>
        <end position="63"/>
    </location>
    <ligand>
        <name>GTP</name>
        <dbReference type="ChEBI" id="CHEBI:37565"/>
    </ligand>
</feature>
<feature type="binding site" evidence="1">
    <location>
        <begin position="140"/>
        <end position="143"/>
    </location>
    <ligand>
        <name>GTP</name>
        <dbReference type="ChEBI" id="CHEBI:37565"/>
    </ligand>
</feature>
<feature type="binding site" evidence="1">
    <location>
        <begin position="175"/>
        <end position="177"/>
    </location>
    <ligand>
        <name>GTP</name>
        <dbReference type="ChEBI" id="CHEBI:37565"/>
    </ligand>
</feature>
<name>ENGB_HALS3</name>
<proteinExistence type="inferred from homology"/>
<reference key="1">
    <citation type="journal article" date="2008" name="Genomics">
        <title>Evolution in the laboratory: the genome of Halobacterium salinarum strain R1 compared to that of strain NRC-1.</title>
        <authorList>
            <person name="Pfeiffer F."/>
            <person name="Schuster S.C."/>
            <person name="Broicher A."/>
            <person name="Falb M."/>
            <person name="Palm P."/>
            <person name="Rodewald K."/>
            <person name="Ruepp A."/>
            <person name="Soppa J."/>
            <person name="Tittor J."/>
            <person name="Oesterhelt D."/>
        </authorList>
    </citation>
    <scope>NUCLEOTIDE SEQUENCE [LARGE SCALE GENOMIC DNA]</scope>
    <source>
        <strain>ATCC 29341 / DSM 671 / R1</strain>
    </source>
</reference>
<protein>
    <recommendedName>
        <fullName evidence="1">Probable GTP-binding protein EngB</fullName>
    </recommendedName>
</protein>
<sequence>MFKDRPDRSDEVVLVGRSNVGKSTLMRAVTGHQVPTGQKPGVTRQPNHFDWASEDFMLTDLPGFGYMQGVEDGHEEAIKTEVVRYVESHADNIMVGVLVLDGKAAVDIIDRHSGGDEIPHVVELYYLLEELGVQPVVAVNKMDKVDDRDERLNDIADRLGLYPPWEQWQDVIAPITAKKDRIAALEDAVNSHFDAAKRDDLKQFFS</sequence>
<evidence type="ECO:0000255" key="1">
    <source>
        <dbReference type="HAMAP-Rule" id="MF_00321"/>
    </source>
</evidence>
<gene>
    <name evidence="1" type="primary">engB</name>
    <name type="ordered locus">OE_4630R</name>
</gene>
<dbReference type="EMBL" id="AM774415">
    <property type="protein sequence ID" value="CAP14940.1"/>
    <property type="molecule type" value="Genomic_DNA"/>
</dbReference>
<dbReference type="RefSeq" id="WP_010903933.1">
    <property type="nucleotide sequence ID" value="NC_010364.1"/>
</dbReference>
<dbReference type="SMR" id="B0R871"/>
<dbReference type="EnsemblBacteria" id="CAP14940">
    <property type="protein sequence ID" value="CAP14940"/>
    <property type="gene ID" value="OE_4630R"/>
</dbReference>
<dbReference type="GeneID" id="89348574"/>
<dbReference type="KEGG" id="hsl:OE_4630R"/>
<dbReference type="HOGENOM" id="CLU_033732_3_0_2"/>
<dbReference type="PhylomeDB" id="B0R871"/>
<dbReference type="Proteomes" id="UP000001321">
    <property type="component" value="Chromosome"/>
</dbReference>
<dbReference type="GO" id="GO:0005525">
    <property type="term" value="F:GTP binding"/>
    <property type="evidence" value="ECO:0007669"/>
    <property type="project" value="UniProtKB-UniRule"/>
</dbReference>
<dbReference type="GO" id="GO:0046872">
    <property type="term" value="F:metal ion binding"/>
    <property type="evidence" value="ECO:0007669"/>
    <property type="project" value="UniProtKB-KW"/>
</dbReference>
<dbReference type="GO" id="GO:0051301">
    <property type="term" value="P:cell division"/>
    <property type="evidence" value="ECO:0007669"/>
    <property type="project" value="UniProtKB-KW"/>
</dbReference>
<dbReference type="CDD" id="cd01876">
    <property type="entry name" value="YihA_EngB"/>
    <property type="match status" value="1"/>
</dbReference>
<dbReference type="Gene3D" id="3.40.50.300">
    <property type="entry name" value="P-loop containing nucleotide triphosphate hydrolases"/>
    <property type="match status" value="1"/>
</dbReference>
<dbReference type="HAMAP" id="MF_00321">
    <property type="entry name" value="GTPase_EngB"/>
    <property type="match status" value="1"/>
</dbReference>
<dbReference type="InterPro" id="IPR030393">
    <property type="entry name" value="G_ENGB_dom"/>
</dbReference>
<dbReference type="InterPro" id="IPR006073">
    <property type="entry name" value="GTP-bd"/>
</dbReference>
<dbReference type="InterPro" id="IPR019987">
    <property type="entry name" value="GTP-bd_ribosome_bio_YsxC"/>
</dbReference>
<dbReference type="InterPro" id="IPR027417">
    <property type="entry name" value="P-loop_NTPase"/>
</dbReference>
<dbReference type="NCBIfam" id="NF003255">
    <property type="entry name" value="PRK04213.1"/>
    <property type="match status" value="1"/>
</dbReference>
<dbReference type="PANTHER" id="PTHR11649:SF13">
    <property type="entry name" value="ENGB-TYPE G DOMAIN-CONTAINING PROTEIN"/>
    <property type="match status" value="1"/>
</dbReference>
<dbReference type="PANTHER" id="PTHR11649">
    <property type="entry name" value="MSS1/TRME-RELATED GTP-BINDING PROTEIN"/>
    <property type="match status" value="1"/>
</dbReference>
<dbReference type="Pfam" id="PF01926">
    <property type="entry name" value="MMR_HSR1"/>
    <property type="match status" value="1"/>
</dbReference>
<dbReference type="SUPFAM" id="SSF52540">
    <property type="entry name" value="P-loop containing nucleoside triphosphate hydrolases"/>
    <property type="match status" value="1"/>
</dbReference>
<dbReference type="PROSITE" id="PS51706">
    <property type="entry name" value="G_ENGB"/>
    <property type="match status" value="1"/>
</dbReference>
<keyword id="KW-0131">Cell cycle</keyword>
<keyword id="KW-0132">Cell division</keyword>
<keyword id="KW-0342">GTP-binding</keyword>
<keyword id="KW-0460">Magnesium</keyword>
<keyword id="KW-0479">Metal-binding</keyword>
<keyword id="KW-0547">Nucleotide-binding</keyword>
<keyword id="KW-0717">Septation</keyword>
<comment type="function">
    <text evidence="1">Necessary for normal cell division and for the maintenance of normal septation.</text>
</comment>
<comment type="cofactor">
    <cofactor evidence="1">
        <name>Mg(2+)</name>
        <dbReference type="ChEBI" id="CHEBI:18420"/>
    </cofactor>
</comment>
<comment type="similarity">
    <text evidence="1">Belongs to the TRAFAC class TrmE-Era-EngA-EngB-Septin-like GTPase superfamily. EngB GTPase family.</text>
</comment>
<organism>
    <name type="scientific">Halobacterium salinarum (strain ATCC 29341 / DSM 671 / R1)</name>
    <dbReference type="NCBI Taxonomy" id="478009"/>
    <lineage>
        <taxon>Archaea</taxon>
        <taxon>Methanobacteriati</taxon>
        <taxon>Methanobacteriota</taxon>
        <taxon>Stenosarchaea group</taxon>
        <taxon>Halobacteria</taxon>
        <taxon>Halobacteriales</taxon>
        <taxon>Halobacteriaceae</taxon>
        <taxon>Halobacterium</taxon>
        <taxon>Halobacterium salinarum NRC-34001</taxon>
    </lineage>
</organism>
<accession>B0R871</accession>